<keyword id="KW-0217">Developmental protein</keyword>
<keyword id="KW-0256">Endoplasmic reticulum</keyword>
<keyword id="KW-0328">Glycosyltransferase</keyword>
<keyword id="KW-0472">Membrane</keyword>
<keyword id="KW-1185">Reference proteome</keyword>
<keyword id="KW-0808">Transferase</keyword>
<keyword id="KW-0812">Transmembrane</keyword>
<keyword id="KW-1133">Transmembrane helix</keyword>
<keyword id="KW-0043">Tumor suppressor</keyword>
<dbReference type="EC" id="2.4.1.258" evidence="2"/>
<dbReference type="EMBL" id="X95241">
    <property type="protein sequence ID" value="CAA64529.1"/>
    <property type="molecule type" value="Genomic_DNA"/>
</dbReference>
<dbReference type="EMBL" id="X77820">
    <property type="protein sequence ID" value="CAA54835.1"/>
    <property type="molecule type" value="mRNA"/>
</dbReference>
<dbReference type="EMBL" id="X95248">
    <property type="protein sequence ID" value="CAA64537.1"/>
    <property type="molecule type" value="Genomic_DNA"/>
</dbReference>
<dbReference type="EMBL" id="X95252">
    <property type="protein sequence ID" value="CAA64541.1"/>
    <property type="molecule type" value="Genomic_DNA"/>
</dbReference>
<dbReference type="EMBL" id="X95243">
    <property type="protein sequence ID" value="CAA64532.1"/>
    <property type="molecule type" value="Genomic_DNA"/>
</dbReference>
<dbReference type="EMBL" id="Y10074">
    <property type="protein sequence ID" value="CAA71167.1"/>
    <property type="molecule type" value="Genomic_DNA"/>
</dbReference>
<dbReference type="EMBL" id="X98094">
    <property type="protein sequence ID" value="CAA66721.1"/>
    <property type="molecule type" value="Genomic_DNA"/>
</dbReference>
<dbReference type="EMBL" id="AE013599">
    <property type="protein sequence ID" value="AAF47050.1"/>
    <property type="molecule type" value="Genomic_DNA"/>
</dbReference>
<dbReference type="EMBL" id="AY061582">
    <property type="protein sequence ID" value="AAL29130.1"/>
    <property type="status" value="ALT_INIT"/>
    <property type="molecule type" value="mRNA"/>
</dbReference>
<dbReference type="PIR" id="S42090">
    <property type="entry name" value="S42090"/>
</dbReference>
<dbReference type="SMR" id="Q27333"/>
<dbReference type="BioGRID" id="63350">
    <property type="interactions" value="7"/>
</dbReference>
<dbReference type="FunCoup" id="Q27333">
    <property type="interactions" value="1266"/>
</dbReference>
<dbReference type="IntAct" id="Q27333">
    <property type="interactions" value="1"/>
</dbReference>
<dbReference type="STRING" id="7227.FBpp0072004"/>
<dbReference type="CAZy" id="GT58">
    <property type="family name" value="Glycosyltransferase Family 58"/>
</dbReference>
<dbReference type="PaxDb" id="7227-FBpp0072004"/>
<dbReference type="DNASU" id="37754"/>
<dbReference type="GeneID" id="37754"/>
<dbReference type="KEGG" id="dme:Dmel_CG4084"/>
<dbReference type="AGR" id="FB:FBgn0011297"/>
<dbReference type="CTD" id="10195"/>
<dbReference type="FlyBase" id="FBgn0011297">
    <property type="gene designation" value="Alg3"/>
</dbReference>
<dbReference type="VEuPathDB" id="VectorBase:FBgn0011297"/>
<dbReference type="eggNOG" id="KOG2762">
    <property type="taxonomic scope" value="Eukaryota"/>
</dbReference>
<dbReference type="HOGENOM" id="CLU_035382_3_0_1"/>
<dbReference type="InParanoid" id="Q27333"/>
<dbReference type="OrthoDB" id="20028at2759"/>
<dbReference type="PhylomeDB" id="Q27333"/>
<dbReference type="Reactome" id="R-DME-446193">
    <property type="pathway name" value="Biosynthesis of the N-glycan precursor (dolichol lipid-linked oligosaccharide, LLO) and transfer to a nascent protein"/>
</dbReference>
<dbReference type="SignaLink" id="Q27333"/>
<dbReference type="UniPathway" id="UPA00378"/>
<dbReference type="BioGRID-ORCS" id="37754">
    <property type="hits" value="0 hits in 1 CRISPR screen"/>
</dbReference>
<dbReference type="GenomeRNAi" id="37754"/>
<dbReference type="PRO" id="PR:Q27333"/>
<dbReference type="Proteomes" id="UP000000803">
    <property type="component" value="Chromosome 2R"/>
</dbReference>
<dbReference type="ExpressionAtlas" id="Q27333">
    <property type="expression patterns" value="baseline and differential"/>
</dbReference>
<dbReference type="GO" id="GO:0005783">
    <property type="term" value="C:endoplasmic reticulum"/>
    <property type="evidence" value="ECO:0000318"/>
    <property type="project" value="GO_Central"/>
</dbReference>
<dbReference type="GO" id="GO:0005789">
    <property type="term" value="C:endoplasmic reticulum membrane"/>
    <property type="evidence" value="ECO:0007669"/>
    <property type="project" value="UniProtKB-SubCell"/>
</dbReference>
<dbReference type="GO" id="GO:0052925">
    <property type="term" value="F:dol-P-Man:Man(5)GlcNAc(2)-PP-Dol alpha-1,3-mannosyltransferase activity"/>
    <property type="evidence" value="ECO:0000318"/>
    <property type="project" value="GO_Central"/>
</dbReference>
<dbReference type="GO" id="GO:0010804">
    <property type="term" value="P:negative regulation of tumor necrosis factor-mediated signaling pathway"/>
    <property type="evidence" value="ECO:0000316"/>
    <property type="project" value="FlyBase"/>
</dbReference>
<dbReference type="GO" id="GO:0006486">
    <property type="term" value="P:protein glycosylation"/>
    <property type="evidence" value="ECO:0000318"/>
    <property type="project" value="GO_Central"/>
</dbReference>
<dbReference type="InterPro" id="IPR007873">
    <property type="entry name" value="Glycosyltransferase_ALG3"/>
</dbReference>
<dbReference type="PANTHER" id="PTHR12646:SF0">
    <property type="entry name" value="DOL-P-MAN:MAN(5)GLCNAC(2)-PP-DOL ALPHA-1,3-MANNOSYLTRANSFERASE"/>
    <property type="match status" value="1"/>
</dbReference>
<dbReference type="PANTHER" id="PTHR12646">
    <property type="entry name" value="NOT56 - RELATED"/>
    <property type="match status" value="1"/>
</dbReference>
<dbReference type="Pfam" id="PF05208">
    <property type="entry name" value="ALG3"/>
    <property type="match status" value="1"/>
</dbReference>
<evidence type="ECO:0000250" key="1">
    <source>
        <dbReference type="UniProtKB" id="P38179"/>
    </source>
</evidence>
<evidence type="ECO:0000250" key="2">
    <source>
        <dbReference type="UniProtKB" id="Q92685"/>
    </source>
</evidence>
<evidence type="ECO:0000255" key="3"/>
<evidence type="ECO:0000256" key="4">
    <source>
        <dbReference type="SAM" id="MobiDB-lite"/>
    </source>
</evidence>
<evidence type="ECO:0000269" key="5">
    <source>
    </source>
</evidence>
<evidence type="ECO:0000269" key="6">
    <source>
    </source>
</evidence>
<evidence type="ECO:0000269" key="7">
    <source>
    </source>
</evidence>
<evidence type="ECO:0000269" key="8">
    <source>
    </source>
</evidence>
<evidence type="ECO:0000303" key="9">
    <source>
    </source>
</evidence>
<evidence type="ECO:0000303" key="10">
    <source>
    </source>
</evidence>
<evidence type="ECO:0000305" key="11"/>
<evidence type="ECO:0000305" key="12">
    <source>
    </source>
</evidence>
<evidence type="ECO:0000305" key="13">
    <source>
    </source>
</evidence>
<evidence type="ECO:0000312" key="14">
    <source>
        <dbReference type="FlyBase" id="FBgn0011297"/>
    </source>
</evidence>
<evidence type="ECO:0000312" key="15">
    <source>
        <dbReference type="Proteomes" id="UP000000803"/>
    </source>
</evidence>
<comment type="function">
    <text evidence="6 7">Probable alpha-1,3-mannosyltransferase involved in the N-glycosylation pathway (PubMed:29870719). Involved in glycosylation of the TNF receptor grnd, regulating its ligand affinity (PubMed:29870719). Required for normal epithelial growth and architecture (PubMed:29870719). Suppressor of JNK-dependent intestinal stem cell proliferation (PubMed:38944657).</text>
</comment>
<comment type="catalytic activity">
    <reaction evidence="2">
        <text>an alpha-D-Man-(1-&gt;2)-alpha-D-Man-(1-&gt;2)-alpha-D-Man-(1-&gt;3)-[alpha-D-Man-(1-&gt;6)]-beta-D-Man-(1-&gt;4)-beta-D-GlcNAc-(1-&gt;4)-alpha-D-GlcNAc-diphospho-di-trans,poly-cis-dolichol + a di-trans,poly-cis-dolichyl beta-D-mannosyl phosphate = an alpha-D-Man-(1-&gt;2)-alpha-D-Man-(1-&gt;2)-alpha-D-Man-(1-&gt;3)-[alpha-D-Man-(1-&gt;3)-alpha-D-Man-(1-&gt;6)]-beta-D-Man-(1-&gt;4)-beta-D-GlcNAc-(1-&gt;4)-alpha-D-GlcNAc-diphospho-di-trans,poly-cis-dolichol + a di-trans,poly-cis-dolichyl phosphate + H(+)</text>
        <dbReference type="Rhea" id="RHEA:29527"/>
        <dbReference type="Rhea" id="RHEA-COMP:19498"/>
        <dbReference type="Rhea" id="RHEA-COMP:19501"/>
        <dbReference type="Rhea" id="RHEA-COMP:19516"/>
        <dbReference type="Rhea" id="RHEA-COMP:19517"/>
        <dbReference type="ChEBI" id="CHEBI:15378"/>
        <dbReference type="ChEBI" id="CHEBI:57683"/>
        <dbReference type="ChEBI" id="CHEBI:58211"/>
        <dbReference type="ChEBI" id="CHEBI:132515"/>
        <dbReference type="ChEBI" id="CHEBI:132516"/>
        <dbReference type="EC" id="2.4.1.258"/>
    </reaction>
    <physiologicalReaction direction="left-to-right" evidence="2">
        <dbReference type="Rhea" id="RHEA:29528"/>
    </physiologicalReaction>
</comment>
<comment type="pathway">
    <text evidence="6">Protein modification; protein glycosylation.</text>
</comment>
<comment type="subcellular location">
    <subcellularLocation>
        <location evidence="8">Endoplasmic reticulum membrane</location>
        <topology evidence="3">Multi-pass membrane protein</topology>
    </subcellularLocation>
</comment>
<comment type="developmental stage">
    <text evidence="8">Highly expressed in all tissues throughout embryogenesis (at protein level) (PubMed:9373138). Expressed at all other stages of the lifecycle but at lower levels (PubMed:9373138). Expressed in all larval tissues except the brain and salivary glands (PubMed:9373138).</text>
</comment>
<comment type="induction">
    <text evidence="7">Down-regulated by bacterial infection in the gut.</text>
</comment>
<comment type="disruption phenotype">
    <text evidence="5 6 7">Pupal lethal (PubMed:1473626, PubMed:29870719). Pupation is delayed by up to 11 days resulting in giant 3rd instar larvae (PubMed:1473626, PubMed:29870719). Imaginal disc cell proliferation is slowed resulting in smaller imaginal discs with aberrant architecture compared to wild type larvae of the same age, however, during delayed pupation imaginal disc cells continue to proliferate unchecked resulting in imaginal disc tumors (PubMed:1473626, PubMed:29870719). RNAi-mediated knockdown in gut progenitor cells results in increased intestinal stem cell mitotic proliferation (PubMed:38944657).</text>
</comment>
<comment type="miscellaneous">
    <text evidence="11">In strains Harvich and Apxo, there are 2 genes which code for l(2)not/Alg3 protein. They differ in their C-terminus.</text>
</comment>
<comment type="similarity">
    <text evidence="11">Belongs to the glycosyltransferase ALG3 family.</text>
</comment>
<comment type="caution">
    <text evidence="6 11 13">Several mutations leading to tumorous growth of imaginal discs were originally thought to affect a neighboring gene encoded within the intron of the Alg3 gene. These mutations were subsequently shown to affect Alg3 (PubMed:29870719). This has led to some confusion in nomenclature. The intronic gene was originally named lethal(2)tumorous imaginal discs (l(2)tid) and Alg3 was named lethal(2)neighbor of tid (l(2)not). Some authors may refer to Alg3 as l(2)tid or l(2)not interchangeably.</text>
</comment>
<comment type="sequence caution" evidence="11">
    <conflict type="erroneous initiation">
        <sequence resource="EMBL-CDS" id="AAL29130"/>
    </conflict>
</comment>
<sequence length="510" mass="58461">MAPPKAASHRPAVRRKKSGTLVDSILDKYLNVRFFKYLLLEPAALPIVGLFVLLAELVINVVVIQRVPYTEIDWVAYMQECEGFLNGTTNYSLLRGDTGPLVYPAAFVYIYSALYYVTSHGTNVRLAQYIFAGIYLLQLALVLRLYSKSRKVPPYVLVLSAFTSYRIHSIYVLRLFNDPVAVLLLYAALNLFLDRRWTLGSTFFSLAVGVKMNILLFAPALLLFYLANLGLLRTILQLAVCGVIQLLLGAPFLLTHPVEYLRGSFDLGRIFEHKWTVNYRFLSRDVFENRTFHVSLLGLHLLLLLAFAKPIWTFFQSYVRLRRIEDQLQPQITQQNLQLKAQKRPKKVEKDKDKDQKKFTTEQQSFLKAFEKSLQKASGGKATPAPAQAEPERYGIHFDRCTQLALLPFFLCNLVGVACSRSLHYQFYVWYFHSLPYLAWSTPYSLGVRCLILGLIEYCWNTYPSTNFSSAALHFTHIILLAGVAKQLIQTMRINNAAKREQQEQQKKLQ</sequence>
<feature type="chain" id="PRO_0000080568" description="Dolichyl-P-Man:Man5GlcNAc2-PP-dolichol alpha-1,3-mannosyltransferase Alg3">
    <location>
        <begin position="1"/>
        <end position="510"/>
    </location>
</feature>
<feature type="topological domain" description="Cytoplasmic" evidence="11">
    <location>
        <begin position="1"/>
        <end position="43"/>
    </location>
</feature>
<feature type="transmembrane region" description="Helical" evidence="3">
    <location>
        <begin position="44"/>
        <end position="64"/>
    </location>
</feature>
<feature type="topological domain" description="Lumenal" evidence="11">
    <location>
        <begin position="65"/>
        <end position="97"/>
    </location>
</feature>
<feature type="transmembrane region" description="Helical" evidence="3">
    <location>
        <begin position="98"/>
        <end position="118"/>
    </location>
</feature>
<feature type="topological domain" description="Cytoplasmic" evidence="11">
    <location>
        <begin position="119"/>
        <end position="125"/>
    </location>
</feature>
<feature type="transmembrane region" description="Helical" evidence="3">
    <location>
        <begin position="126"/>
        <end position="146"/>
    </location>
</feature>
<feature type="topological domain" description="Lumenal" evidence="11">
    <location>
        <begin position="147"/>
        <end position="171"/>
    </location>
</feature>
<feature type="transmembrane region" description="Helical" evidence="3">
    <location>
        <begin position="172"/>
        <end position="192"/>
    </location>
</feature>
<feature type="topological domain" description="Cytoplasmic" evidence="11">
    <location>
        <begin position="193"/>
        <end position="211"/>
    </location>
</feature>
<feature type="transmembrane region" description="Helical" evidence="3">
    <location>
        <begin position="212"/>
        <end position="232"/>
    </location>
</feature>
<feature type="topological domain" description="Lumenal" evidence="11">
    <location>
        <position position="233"/>
    </location>
</feature>
<feature type="transmembrane region" description="Helical" evidence="3">
    <location>
        <begin position="234"/>
        <end position="254"/>
    </location>
</feature>
<feature type="topological domain" description="Cytoplasmic" evidence="11">
    <location>
        <begin position="255"/>
        <end position="294"/>
    </location>
</feature>
<feature type="transmembrane region" description="Helical" evidence="3">
    <location>
        <begin position="295"/>
        <end position="315"/>
    </location>
</feature>
<feature type="topological domain" description="Lumenal" evidence="11">
    <location>
        <begin position="316"/>
        <end position="403"/>
    </location>
</feature>
<feature type="transmembrane region" description="Helical" evidence="3">
    <location>
        <begin position="404"/>
        <end position="424"/>
    </location>
</feature>
<feature type="topological domain" description="Cytoplasmic" evidence="11">
    <location>
        <begin position="425"/>
        <end position="426"/>
    </location>
</feature>
<feature type="transmembrane region" description="Helical" evidence="3">
    <location>
        <begin position="427"/>
        <end position="447"/>
    </location>
</feature>
<feature type="topological domain" description="Lumenal" evidence="11">
    <location>
        <begin position="448"/>
        <end position="464"/>
    </location>
</feature>
<feature type="transmembrane region" description="Helical" evidence="3">
    <location>
        <begin position="465"/>
        <end position="485"/>
    </location>
</feature>
<feature type="topological domain" description="Cytoplasmic" evidence="11">
    <location>
        <begin position="486"/>
        <end position="510"/>
    </location>
</feature>
<feature type="region of interest" description="Disordered" evidence="4">
    <location>
        <begin position="337"/>
        <end position="358"/>
    </location>
</feature>
<feature type="compositionally biased region" description="Basic and acidic residues" evidence="4">
    <location>
        <begin position="348"/>
        <end position="358"/>
    </location>
</feature>
<feature type="sequence variant" description="In strain: Berkeley and bIf.">
    <original>V</original>
    <variation>L</variation>
    <location>
        <position position="286"/>
    </location>
</feature>
<feature type="sequence variant" description="In strain: Berkeley, bIf and Apxo.">
    <original>I</original>
    <variation>T</variation>
    <location>
        <position position="311"/>
    </location>
</feature>
<feature type="sequence variant" description="In strain: Berkeley, bIf and Apxo.">
    <original>T</original>
    <variation>A</variation>
    <location>
        <position position="333"/>
    </location>
</feature>
<feature type="sequence variant" description="In strain: Berkeley, bIf and Apxo.">
    <original>Q</original>
    <variation>E</variation>
    <location>
        <position position="338"/>
    </location>
</feature>
<feature type="sequence variant" description="In strain: Berkeley and bIf.">
    <original>K</original>
    <variation>N</variation>
    <location>
        <position position="340"/>
    </location>
</feature>
<feature type="sequence variant" description="In strain: Berkeley, bIf and Apxo.">
    <original>I</original>
    <variation>V</variation>
    <location>
        <position position="489"/>
    </location>
</feature>
<feature type="mutagenesis site" description="In tid4 mutant." evidence="8">
    <original>H</original>
    <variation>R</variation>
    <location>
        <position position="433"/>
    </location>
</feature>
<organism evidence="15">
    <name type="scientific">Drosophila melanogaster</name>
    <name type="common">Fruit fly</name>
    <dbReference type="NCBI Taxonomy" id="7227"/>
    <lineage>
        <taxon>Eukaryota</taxon>
        <taxon>Metazoa</taxon>
        <taxon>Ecdysozoa</taxon>
        <taxon>Arthropoda</taxon>
        <taxon>Hexapoda</taxon>
        <taxon>Insecta</taxon>
        <taxon>Pterygota</taxon>
        <taxon>Neoptera</taxon>
        <taxon>Endopterygota</taxon>
        <taxon>Diptera</taxon>
        <taxon>Brachycera</taxon>
        <taxon>Muscomorpha</taxon>
        <taxon>Ephydroidea</taxon>
        <taxon>Drosophilidae</taxon>
        <taxon>Drosophila</taxon>
        <taxon>Sophophora</taxon>
    </lineage>
</organism>
<reference key="1">
    <citation type="journal article" date="1997" name="Gene">
        <title>Gene within gene configuration and expression of the Drosophila melanogaster genes lethal(2) neighbour of tid [l(2)not] and lethal(2) relative of tid.</title>
        <authorList>
            <person name="Kurzik-Dumke U."/>
            <person name="Kaymer M."/>
            <person name="Gundacker D."/>
            <person name="Debes A."/>
            <person name="Labitzke K."/>
        </authorList>
    </citation>
    <scope>NUCLEOTIDE SEQUENCE [GENOMIC DNA / MRNA]</scope>
    <scope>SUBCELLULAR LOCATION</scope>
    <scope>DEVELOPMENTAL STAGE</scope>
    <scope>MUTAGENESIS OF HIS-433</scope>
    <source>
        <strain>Apxo</strain>
        <strain>bIf</strain>
        <strain>Harvich</strain>
        <strain>Oregon-R</strain>
        <tissue>Embryo</tissue>
    </source>
</reference>
<reference key="2">
    <citation type="submission" date="1996-05" db="EMBL/GenBank/DDBJ databases">
        <title>Sequence of a 10291 nt genomic region of Drosophila melanogaster harbouring the genes l(2)tid, l(2)not, l(2)rot, and l(2)dtl.</title>
        <authorList>
            <person name="Gundacker S."/>
            <person name="Neubhuer M."/>
            <person name="Kurzik-Dumke U."/>
        </authorList>
    </citation>
    <scope>NUCLEOTIDE SEQUENCE [GENOMIC DNA]</scope>
    <source>
        <strain>Oregon-2</strain>
    </source>
</reference>
<reference key="3">
    <citation type="journal article" date="2000" name="Science">
        <title>The genome sequence of Drosophila melanogaster.</title>
        <authorList>
            <person name="Adams M.D."/>
            <person name="Celniker S.E."/>
            <person name="Holt R.A."/>
            <person name="Evans C.A."/>
            <person name="Gocayne J.D."/>
            <person name="Amanatides P.G."/>
            <person name="Scherer S.E."/>
            <person name="Li P.W."/>
            <person name="Hoskins R.A."/>
            <person name="Galle R.F."/>
            <person name="George R.A."/>
            <person name="Lewis S.E."/>
            <person name="Richards S."/>
            <person name="Ashburner M."/>
            <person name="Henderson S.N."/>
            <person name="Sutton G.G."/>
            <person name="Wortman J.R."/>
            <person name="Yandell M.D."/>
            <person name="Zhang Q."/>
            <person name="Chen L.X."/>
            <person name="Brandon R.C."/>
            <person name="Rogers Y.-H.C."/>
            <person name="Blazej R.G."/>
            <person name="Champe M."/>
            <person name="Pfeiffer B.D."/>
            <person name="Wan K.H."/>
            <person name="Doyle C."/>
            <person name="Baxter E.G."/>
            <person name="Helt G."/>
            <person name="Nelson C.R."/>
            <person name="Miklos G.L.G."/>
            <person name="Abril J.F."/>
            <person name="Agbayani A."/>
            <person name="An H.-J."/>
            <person name="Andrews-Pfannkoch C."/>
            <person name="Baldwin D."/>
            <person name="Ballew R.M."/>
            <person name="Basu A."/>
            <person name="Baxendale J."/>
            <person name="Bayraktaroglu L."/>
            <person name="Beasley E.M."/>
            <person name="Beeson K.Y."/>
            <person name="Benos P.V."/>
            <person name="Berman B.P."/>
            <person name="Bhandari D."/>
            <person name="Bolshakov S."/>
            <person name="Borkova D."/>
            <person name="Botchan M.R."/>
            <person name="Bouck J."/>
            <person name="Brokstein P."/>
            <person name="Brottier P."/>
            <person name="Burtis K.C."/>
            <person name="Busam D.A."/>
            <person name="Butler H."/>
            <person name="Cadieu E."/>
            <person name="Center A."/>
            <person name="Chandra I."/>
            <person name="Cherry J.M."/>
            <person name="Cawley S."/>
            <person name="Dahlke C."/>
            <person name="Davenport L.B."/>
            <person name="Davies P."/>
            <person name="de Pablos B."/>
            <person name="Delcher A."/>
            <person name="Deng Z."/>
            <person name="Mays A.D."/>
            <person name="Dew I."/>
            <person name="Dietz S.M."/>
            <person name="Dodson K."/>
            <person name="Doup L.E."/>
            <person name="Downes M."/>
            <person name="Dugan-Rocha S."/>
            <person name="Dunkov B.C."/>
            <person name="Dunn P."/>
            <person name="Durbin K.J."/>
            <person name="Evangelista C.C."/>
            <person name="Ferraz C."/>
            <person name="Ferriera S."/>
            <person name="Fleischmann W."/>
            <person name="Fosler C."/>
            <person name="Gabrielian A.E."/>
            <person name="Garg N.S."/>
            <person name="Gelbart W.M."/>
            <person name="Glasser K."/>
            <person name="Glodek A."/>
            <person name="Gong F."/>
            <person name="Gorrell J.H."/>
            <person name="Gu Z."/>
            <person name="Guan P."/>
            <person name="Harris M."/>
            <person name="Harris N.L."/>
            <person name="Harvey D.A."/>
            <person name="Heiman T.J."/>
            <person name="Hernandez J.R."/>
            <person name="Houck J."/>
            <person name="Hostin D."/>
            <person name="Houston K.A."/>
            <person name="Howland T.J."/>
            <person name="Wei M.-H."/>
            <person name="Ibegwam C."/>
            <person name="Jalali M."/>
            <person name="Kalush F."/>
            <person name="Karpen G.H."/>
            <person name="Ke Z."/>
            <person name="Kennison J.A."/>
            <person name="Ketchum K.A."/>
            <person name="Kimmel B.E."/>
            <person name="Kodira C.D."/>
            <person name="Kraft C.L."/>
            <person name="Kravitz S."/>
            <person name="Kulp D."/>
            <person name="Lai Z."/>
            <person name="Lasko P."/>
            <person name="Lei Y."/>
            <person name="Levitsky A.A."/>
            <person name="Li J.H."/>
            <person name="Li Z."/>
            <person name="Liang Y."/>
            <person name="Lin X."/>
            <person name="Liu X."/>
            <person name="Mattei B."/>
            <person name="McIntosh T.C."/>
            <person name="McLeod M.P."/>
            <person name="McPherson D."/>
            <person name="Merkulov G."/>
            <person name="Milshina N.V."/>
            <person name="Mobarry C."/>
            <person name="Morris J."/>
            <person name="Moshrefi A."/>
            <person name="Mount S.M."/>
            <person name="Moy M."/>
            <person name="Murphy B."/>
            <person name="Murphy L."/>
            <person name="Muzny D.M."/>
            <person name="Nelson D.L."/>
            <person name="Nelson D.R."/>
            <person name="Nelson K.A."/>
            <person name="Nixon K."/>
            <person name="Nusskern D.R."/>
            <person name="Pacleb J.M."/>
            <person name="Palazzolo M."/>
            <person name="Pittman G.S."/>
            <person name="Pan S."/>
            <person name="Pollard J."/>
            <person name="Puri V."/>
            <person name="Reese M.G."/>
            <person name="Reinert K."/>
            <person name="Remington K."/>
            <person name="Saunders R.D.C."/>
            <person name="Scheeler F."/>
            <person name="Shen H."/>
            <person name="Shue B.C."/>
            <person name="Siden-Kiamos I."/>
            <person name="Simpson M."/>
            <person name="Skupski M.P."/>
            <person name="Smith T.J."/>
            <person name="Spier E."/>
            <person name="Spradling A.C."/>
            <person name="Stapleton M."/>
            <person name="Strong R."/>
            <person name="Sun E."/>
            <person name="Svirskas R."/>
            <person name="Tector C."/>
            <person name="Turner R."/>
            <person name="Venter E."/>
            <person name="Wang A.H."/>
            <person name="Wang X."/>
            <person name="Wang Z.-Y."/>
            <person name="Wassarman D.A."/>
            <person name="Weinstock G.M."/>
            <person name="Weissenbach J."/>
            <person name="Williams S.M."/>
            <person name="Woodage T."/>
            <person name="Worley K.C."/>
            <person name="Wu D."/>
            <person name="Yang S."/>
            <person name="Yao Q.A."/>
            <person name="Ye J."/>
            <person name="Yeh R.-F."/>
            <person name="Zaveri J.S."/>
            <person name="Zhan M."/>
            <person name="Zhang G."/>
            <person name="Zhao Q."/>
            <person name="Zheng L."/>
            <person name="Zheng X.H."/>
            <person name="Zhong F.N."/>
            <person name="Zhong W."/>
            <person name="Zhou X."/>
            <person name="Zhu S.C."/>
            <person name="Zhu X."/>
            <person name="Smith H.O."/>
            <person name="Gibbs R.A."/>
            <person name="Myers E.W."/>
            <person name="Rubin G.M."/>
            <person name="Venter J.C."/>
        </authorList>
    </citation>
    <scope>NUCLEOTIDE SEQUENCE [LARGE SCALE GENOMIC DNA]</scope>
    <source>
        <strain>Berkeley</strain>
    </source>
</reference>
<reference key="4">
    <citation type="journal article" date="2002" name="Genome Biol.">
        <title>Annotation of the Drosophila melanogaster euchromatic genome: a systematic review.</title>
        <authorList>
            <person name="Misra S."/>
            <person name="Crosby M.A."/>
            <person name="Mungall C.J."/>
            <person name="Matthews B.B."/>
            <person name="Campbell K.S."/>
            <person name="Hradecky P."/>
            <person name="Huang Y."/>
            <person name="Kaminker J.S."/>
            <person name="Millburn G.H."/>
            <person name="Prochnik S.E."/>
            <person name="Smith C.D."/>
            <person name="Tupy J.L."/>
            <person name="Whitfield E.J."/>
            <person name="Bayraktaroglu L."/>
            <person name="Berman B.P."/>
            <person name="Bettencourt B.R."/>
            <person name="Celniker S.E."/>
            <person name="de Grey A.D.N.J."/>
            <person name="Drysdale R.A."/>
            <person name="Harris N.L."/>
            <person name="Richter J."/>
            <person name="Russo S."/>
            <person name="Schroeder A.J."/>
            <person name="Shu S.Q."/>
            <person name="Stapleton M."/>
            <person name="Yamada C."/>
            <person name="Ashburner M."/>
            <person name="Gelbart W.M."/>
            <person name="Rubin G.M."/>
            <person name="Lewis S.E."/>
        </authorList>
    </citation>
    <scope>GENOME REANNOTATION</scope>
    <source>
        <strain>Berkeley</strain>
    </source>
</reference>
<reference key="5">
    <citation type="journal article" date="2002" name="Genome Biol.">
        <title>A Drosophila full-length cDNA resource.</title>
        <authorList>
            <person name="Stapleton M."/>
            <person name="Carlson J.W."/>
            <person name="Brokstein P."/>
            <person name="Yu C."/>
            <person name="Champe M."/>
            <person name="George R.A."/>
            <person name="Guarin H."/>
            <person name="Kronmiller B."/>
            <person name="Pacleb J.M."/>
            <person name="Park S."/>
            <person name="Wan K.H."/>
            <person name="Rubin G.M."/>
            <person name="Celniker S.E."/>
        </authorList>
    </citation>
    <scope>NUCLEOTIDE SEQUENCE [LARGE SCALE MRNA] OF 179-510</scope>
    <source>
        <strain>Berkeley</strain>
        <tissue>Embryo</tissue>
    </source>
</reference>
<reference key="6">
    <citation type="journal article" date="1992" name="Differentiation">
        <title>Genetic, cytogenetic and developmental analysis of the Drosophila melanogaster tumor suppressor gene lethal(2)tumorous imaginal discs (1(2)tid).</title>
        <authorList>
            <person name="Kurzik-Dumke U."/>
            <person name="Phannavong B."/>
            <person name="Gundacker D."/>
            <person name="Gateff E."/>
        </authorList>
    </citation>
    <scope>DISRUPTION PHENOTYPE</scope>
</reference>
<reference key="7">
    <citation type="journal article" date="2018" name="Dev. Cell">
        <title>A Drosophila Tumor Suppressor Gene Prevents Tonic TNF Signaling through Receptor N-Glycosylation.</title>
        <authorList>
            <person name="de Vreede G."/>
            <person name="Morrison H.A."/>
            <person name="Houser A.M."/>
            <person name="Boileau R.M."/>
            <person name="Andersen D."/>
            <person name="Colombani J."/>
            <person name="Bilder D."/>
        </authorList>
    </citation>
    <scope>FUNCTION</scope>
    <scope>PATHWAY</scope>
    <scope>DISRUPTION PHENOTYPE</scope>
</reference>
<reference key="8">
    <citation type="journal article" date="2024" name="Nat. Commun.">
        <title>Inter-cell type interactions that control JNK signaling in the Drosophila intestine.</title>
        <authorList>
            <person name="Zhang P."/>
            <person name="Pronovost S.M."/>
            <person name="Marchetti M."/>
            <person name="Zhang C."/>
            <person name="Kang X."/>
            <person name="Kandelouei T."/>
            <person name="Li C."/>
            <person name="Edgar B.A."/>
        </authorList>
    </citation>
    <scope>FUNCTION</scope>
    <scope>DISRUPTION PHENOTYPE</scope>
    <scope>INDUCTION BY BACTERIAL INFECTION</scope>
</reference>
<name>ALG3_DROME</name>
<accession>Q27333</accession>
<accession>O02532</accession>
<accession>O02533</accession>
<accession>Q24419</accession>
<accession>Q24420</accession>
<accession>Q24421</accession>
<accession>Q24607</accession>
<accession>Q95R76</accession>
<accession>Q9W1K8</accession>
<protein>
    <recommendedName>
        <fullName evidence="12">Dolichyl-P-Man:Man5GlcNAc2-PP-dolichol alpha-1,3-mannosyltransferase Alg3</fullName>
        <ecNumber evidence="2">2.4.1.258</ecNumber>
    </recommendedName>
    <alternativeName>
        <fullName evidence="14">Alpha-1,3-mannosyltransferase Alg3</fullName>
    </alternativeName>
    <alternativeName>
        <fullName evidence="1">Asparagine-linked glycosylation protein 3 homolog</fullName>
    </alternativeName>
    <alternativeName>
        <fullName evidence="10">Lethal(2)neighbor of tid protein</fullName>
    </alternativeName>
    <alternativeName>
        <fullName evidence="9">Lethal(2)tumorous imaginal discs</fullName>
    </alternativeName>
    <alternativeName>
        <fullName evidence="10">NOT45</fullName>
    </alternativeName>
    <alternativeName>
        <fullName evidence="10">NOT56</fullName>
    </alternativeName>
</protein>
<proteinExistence type="evidence at protein level"/>
<gene>
    <name evidence="14" type="primary">Alg3</name>
    <name evidence="14" type="synonym">l(2)not</name>
    <name evidence="14" type="synonym">l(2)tid</name>
    <name evidence="9" type="synonym">tid</name>
    <name evidence="14" type="ORF">CG4084</name>
</gene>